<reference key="1">
    <citation type="journal article" date="2016" name="Genome Announc.">
        <title>Complete genome sequence of Alkaliphilus metalliredigens strain QYMF, an alkaliphilic and metal-reducing bacterium isolated from borax-contaminated leachate ponds.</title>
        <authorList>
            <person name="Hwang C."/>
            <person name="Copeland A."/>
            <person name="Lucas S."/>
            <person name="Lapidus A."/>
            <person name="Barry K."/>
            <person name="Detter J.C."/>
            <person name="Glavina Del Rio T."/>
            <person name="Hammon N."/>
            <person name="Israni S."/>
            <person name="Dalin E."/>
            <person name="Tice H."/>
            <person name="Pitluck S."/>
            <person name="Chertkov O."/>
            <person name="Brettin T."/>
            <person name="Bruce D."/>
            <person name="Han C."/>
            <person name="Schmutz J."/>
            <person name="Larimer F."/>
            <person name="Land M.L."/>
            <person name="Hauser L."/>
            <person name="Kyrpides N."/>
            <person name="Mikhailova N."/>
            <person name="Ye Q."/>
            <person name="Zhou J."/>
            <person name="Richardson P."/>
            <person name="Fields M.W."/>
        </authorList>
    </citation>
    <scope>NUCLEOTIDE SEQUENCE [LARGE SCALE GENOMIC DNA]</scope>
    <source>
        <strain>QYMF</strain>
    </source>
</reference>
<comment type="catalytic activity">
    <reaction evidence="1">
        <text>2-(N(omega)-L-arginino)succinate = fumarate + L-arginine</text>
        <dbReference type="Rhea" id="RHEA:24020"/>
        <dbReference type="ChEBI" id="CHEBI:29806"/>
        <dbReference type="ChEBI" id="CHEBI:32682"/>
        <dbReference type="ChEBI" id="CHEBI:57472"/>
        <dbReference type="EC" id="4.3.2.1"/>
    </reaction>
</comment>
<comment type="pathway">
    <text evidence="1">Amino-acid biosynthesis; L-arginine biosynthesis; L-arginine from L-ornithine and carbamoyl phosphate: step 3/3.</text>
</comment>
<comment type="subcellular location">
    <subcellularLocation>
        <location evidence="1">Cytoplasm</location>
    </subcellularLocation>
</comment>
<comment type="similarity">
    <text evidence="1">Belongs to the lyase 1 family. Argininosuccinate lyase subfamily.</text>
</comment>
<feature type="chain" id="PRO_1000057046" description="Argininosuccinate lyase">
    <location>
        <begin position="1"/>
        <end position="460"/>
    </location>
</feature>
<dbReference type="EC" id="4.3.2.1" evidence="1"/>
<dbReference type="EMBL" id="CP000724">
    <property type="protein sequence ID" value="ABR46877.1"/>
    <property type="molecule type" value="Genomic_DNA"/>
</dbReference>
<dbReference type="RefSeq" id="WP_011971785.1">
    <property type="nucleotide sequence ID" value="NC_009633.1"/>
</dbReference>
<dbReference type="SMR" id="A6TL09"/>
<dbReference type="STRING" id="293826.Amet_0652"/>
<dbReference type="KEGG" id="amt:Amet_0652"/>
<dbReference type="eggNOG" id="COG0165">
    <property type="taxonomic scope" value="Bacteria"/>
</dbReference>
<dbReference type="HOGENOM" id="CLU_027272_2_3_9"/>
<dbReference type="OrthoDB" id="9769623at2"/>
<dbReference type="UniPathway" id="UPA00068">
    <property type="reaction ID" value="UER00114"/>
</dbReference>
<dbReference type="Proteomes" id="UP000001572">
    <property type="component" value="Chromosome"/>
</dbReference>
<dbReference type="GO" id="GO:0005829">
    <property type="term" value="C:cytosol"/>
    <property type="evidence" value="ECO:0007669"/>
    <property type="project" value="TreeGrafter"/>
</dbReference>
<dbReference type="GO" id="GO:0004056">
    <property type="term" value="F:argininosuccinate lyase activity"/>
    <property type="evidence" value="ECO:0007669"/>
    <property type="project" value="UniProtKB-UniRule"/>
</dbReference>
<dbReference type="GO" id="GO:0042450">
    <property type="term" value="P:arginine biosynthetic process via ornithine"/>
    <property type="evidence" value="ECO:0007669"/>
    <property type="project" value="InterPro"/>
</dbReference>
<dbReference type="GO" id="GO:0006526">
    <property type="term" value="P:L-arginine biosynthetic process"/>
    <property type="evidence" value="ECO:0007669"/>
    <property type="project" value="UniProtKB-UniRule"/>
</dbReference>
<dbReference type="CDD" id="cd01359">
    <property type="entry name" value="Argininosuccinate_lyase"/>
    <property type="match status" value="1"/>
</dbReference>
<dbReference type="FunFam" id="1.10.275.10:FF:000002">
    <property type="entry name" value="Argininosuccinate lyase"/>
    <property type="match status" value="1"/>
</dbReference>
<dbReference type="FunFam" id="1.10.40.30:FF:000001">
    <property type="entry name" value="Argininosuccinate lyase"/>
    <property type="match status" value="1"/>
</dbReference>
<dbReference type="FunFam" id="1.20.200.10:FF:000002">
    <property type="entry name" value="Argininosuccinate lyase"/>
    <property type="match status" value="1"/>
</dbReference>
<dbReference type="Gene3D" id="1.10.40.30">
    <property type="entry name" value="Fumarase/aspartase (C-terminal domain)"/>
    <property type="match status" value="1"/>
</dbReference>
<dbReference type="Gene3D" id="1.20.200.10">
    <property type="entry name" value="Fumarase/aspartase (Central domain)"/>
    <property type="match status" value="1"/>
</dbReference>
<dbReference type="Gene3D" id="1.10.275.10">
    <property type="entry name" value="Fumarase/aspartase (N-terminal domain)"/>
    <property type="match status" value="1"/>
</dbReference>
<dbReference type="HAMAP" id="MF_00006">
    <property type="entry name" value="Arg_succ_lyase"/>
    <property type="match status" value="1"/>
</dbReference>
<dbReference type="InterPro" id="IPR029419">
    <property type="entry name" value="Arg_succ_lyase_C"/>
</dbReference>
<dbReference type="InterPro" id="IPR009049">
    <property type="entry name" value="Argininosuccinate_lyase"/>
</dbReference>
<dbReference type="InterPro" id="IPR024083">
    <property type="entry name" value="Fumarase/histidase_N"/>
</dbReference>
<dbReference type="InterPro" id="IPR020557">
    <property type="entry name" value="Fumarate_lyase_CS"/>
</dbReference>
<dbReference type="InterPro" id="IPR000362">
    <property type="entry name" value="Fumarate_lyase_fam"/>
</dbReference>
<dbReference type="InterPro" id="IPR022761">
    <property type="entry name" value="Fumarate_lyase_N"/>
</dbReference>
<dbReference type="InterPro" id="IPR008948">
    <property type="entry name" value="L-Aspartase-like"/>
</dbReference>
<dbReference type="NCBIfam" id="TIGR00838">
    <property type="entry name" value="argH"/>
    <property type="match status" value="1"/>
</dbReference>
<dbReference type="PANTHER" id="PTHR43814">
    <property type="entry name" value="ARGININOSUCCINATE LYASE"/>
    <property type="match status" value="1"/>
</dbReference>
<dbReference type="PANTHER" id="PTHR43814:SF1">
    <property type="entry name" value="ARGININOSUCCINATE LYASE"/>
    <property type="match status" value="1"/>
</dbReference>
<dbReference type="Pfam" id="PF14698">
    <property type="entry name" value="ASL_C2"/>
    <property type="match status" value="1"/>
</dbReference>
<dbReference type="Pfam" id="PF00206">
    <property type="entry name" value="Lyase_1"/>
    <property type="match status" value="1"/>
</dbReference>
<dbReference type="PRINTS" id="PR00145">
    <property type="entry name" value="ARGSUCLYASE"/>
</dbReference>
<dbReference type="PRINTS" id="PR00149">
    <property type="entry name" value="FUMRATELYASE"/>
</dbReference>
<dbReference type="SUPFAM" id="SSF48557">
    <property type="entry name" value="L-aspartase-like"/>
    <property type="match status" value="1"/>
</dbReference>
<dbReference type="PROSITE" id="PS00163">
    <property type="entry name" value="FUMARATE_LYASES"/>
    <property type="match status" value="1"/>
</dbReference>
<evidence type="ECO:0000255" key="1">
    <source>
        <dbReference type="HAMAP-Rule" id="MF_00006"/>
    </source>
</evidence>
<proteinExistence type="inferred from homology"/>
<gene>
    <name evidence="1" type="primary">argH</name>
    <name type="ordered locus">Amet_0652</name>
</gene>
<name>ARLY_ALKMQ</name>
<sequence length="460" mass="52003">MKLWGGRFSKNTAALVDQFNASIEFDQKLYKYDIAGSVAHAKMLAHANIITKQESQLIVEGLQSILADIEAGKVEFQLELEDIHMNIETLLIDSIGEVGKKLHTARSRNDQVAVDIRLYLREEILEICELIKQLLITFTDIAEKHVDTIMPGYTHLQRAQAVTLGHHFMAYFQMFKRDHERLLDCYKRVNVMPLGAGALAGTTYATDRVFLAKELGFDAICENSLDAVSDRDFIIEFNNTASIIMMHLSRFCEELIIWNTAEFGFIEMDDAYSTGSSIMPQKKNPDLAELIRGKTGRVYGNQVNIMTMMKALPLAYNKDMQEDKIPLFDTVDNVKGCLEIFNEMIKSTTFKKENMKKATKEGFMNATDVADYLVKKGVPFRSAHEIVGKMVLHCVQTSKTIEDLTLDEFQNFSPTFTEDILEVIQIENCVASKISQGSTSPTNVLIMVNQARVFIEEVLS</sequence>
<accession>A6TL09</accession>
<organism>
    <name type="scientific">Alkaliphilus metalliredigens (strain QYMF)</name>
    <dbReference type="NCBI Taxonomy" id="293826"/>
    <lineage>
        <taxon>Bacteria</taxon>
        <taxon>Bacillati</taxon>
        <taxon>Bacillota</taxon>
        <taxon>Clostridia</taxon>
        <taxon>Peptostreptococcales</taxon>
        <taxon>Natronincolaceae</taxon>
        <taxon>Alkaliphilus</taxon>
    </lineage>
</organism>
<protein>
    <recommendedName>
        <fullName evidence="1">Argininosuccinate lyase</fullName>
        <shortName evidence="1">ASAL</shortName>
        <ecNumber evidence="1">4.3.2.1</ecNumber>
    </recommendedName>
    <alternativeName>
        <fullName evidence="1">Arginosuccinase</fullName>
    </alternativeName>
</protein>
<keyword id="KW-0028">Amino-acid biosynthesis</keyword>
<keyword id="KW-0055">Arginine biosynthesis</keyword>
<keyword id="KW-0963">Cytoplasm</keyword>
<keyword id="KW-0456">Lyase</keyword>
<keyword id="KW-1185">Reference proteome</keyword>